<organism>
    <name type="scientific">Xenopus tropicalis</name>
    <name type="common">Western clawed frog</name>
    <name type="synonym">Silurana tropicalis</name>
    <dbReference type="NCBI Taxonomy" id="8364"/>
    <lineage>
        <taxon>Eukaryota</taxon>
        <taxon>Metazoa</taxon>
        <taxon>Chordata</taxon>
        <taxon>Craniata</taxon>
        <taxon>Vertebrata</taxon>
        <taxon>Euteleostomi</taxon>
        <taxon>Amphibia</taxon>
        <taxon>Batrachia</taxon>
        <taxon>Anura</taxon>
        <taxon>Pipoidea</taxon>
        <taxon>Pipidae</taxon>
        <taxon>Xenopodinae</taxon>
        <taxon>Xenopus</taxon>
        <taxon>Silurana</taxon>
    </lineage>
</organism>
<name>CFA97_XENTR</name>
<protein>
    <recommendedName>
        <fullName evidence="1">Cilia- and flagella-associated protein 97</fullName>
    </recommendedName>
</protein>
<keyword id="KW-0175">Coiled coil</keyword>
<keyword id="KW-1185">Reference proteome</keyword>
<accession>A4IJ15</accession>
<sequence length="467" mass="52014">MDRYGNLSDDGEVDHSFFDSDVDESANKVGVASVGSNKQENINTNVNKDVNKISFENKQNVMSGEKGRNHVYEEKIAKPSSPSTAAVAPRPDSALKSGRTSAQSLRIEATIPTGIPQIRREFEDNYYPDEEDSSEDECHNSRPKTAKQTNIGKKSTGKSNRDFVSTISSSDTEYSDTGSDDGASKSSYQSSKGSLMRSPERKPSRSSMRELRHYAEESEDTVTDVTPLSTPDISPIQSFDLAATSEVLKSTFKRQENISQEIYDPDNDLRINQKAVQDAVDLNQLLKAFMHLDKKEPSSVQDENPVMHNKKNFSFSNDEVRQIERENQRLLKELTRQAAKPRSKSLTPKKPMSAPTRLYHSAINRQKEQQRIERENMALLKRLESVKPTVGMTRTEQLMDYQRQAGYLSATALSPRPGKASVSRLSPSVSSGGFSRMSSATNRSERTGSSGALLRPTRSGNVRAAWQ</sequence>
<gene>
    <name evidence="1" type="primary">cfap97</name>
</gene>
<proteinExistence type="evidence at transcript level"/>
<feature type="chain" id="PRO_0000309228" description="Cilia- and flagella-associated protein 97" evidence="4">
    <location>
        <begin position="1"/>
        <end position="467"/>
    </location>
</feature>
<feature type="region of interest" description="Disordered" evidence="3">
    <location>
        <begin position="1"/>
        <end position="20"/>
    </location>
</feature>
<feature type="region of interest" description="Disordered" evidence="3">
    <location>
        <begin position="76"/>
        <end position="235"/>
    </location>
</feature>
<feature type="region of interest" description="Disordered" evidence="3">
    <location>
        <begin position="336"/>
        <end position="370"/>
    </location>
</feature>
<feature type="region of interest" description="Disordered" evidence="3">
    <location>
        <begin position="412"/>
        <end position="467"/>
    </location>
</feature>
<feature type="coiled-coil region" evidence="2">
    <location>
        <begin position="310"/>
        <end position="387"/>
    </location>
</feature>
<feature type="compositionally biased region" description="Acidic residues" evidence="3">
    <location>
        <begin position="124"/>
        <end position="135"/>
    </location>
</feature>
<feature type="compositionally biased region" description="Polar residues" evidence="3">
    <location>
        <begin position="162"/>
        <end position="177"/>
    </location>
</feature>
<feature type="compositionally biased region" description="Low complexity" evidence="3">
    <location>
        <begin position="180"/>
        <end position="194"/>
    </location>
</feature>
<feature type="compositionally biased region" description="Basic and acidic residues" evidence="3">
    <location>
        <begin position="198"/>
        <end position="216"/>
    </location>
</feature>
<feature type="compositionally biased region" description="Polar residues" evidence="3">
    <location>
        <begin position="223"/>
        <end position="235"/>
    </location>
</feature>
<feature type="compositionally biased region" description="Low complexity" evidence="3">
    <location>
        <begin position="421"/>
        <end position="439"/>
    </location>
</feature>
<comment type="similarity">
    <text evidence="4">Belongs to the CFAP97 family.</text>
</comment>
<evidence type="ECO:0000250" key="1">
    <source>
        <dbReference type="UniProtKB" id="Q9P2B7"/>
    </source>
</evidence>
<evidence type="ECO:0000255" key="2"/>
<evidence type="ECO:0000256" key="3">
    <source>
        <dbReference type="SAM" id="MobiDB-lite"/>
    </source>
</evidence>
<evidence type="ECO:0000305" key="4"/>
<dbReference type="EMBL" id="BC136237">
    <property type="protein sequence ID" value="AAI36238.1"/>
    <property type="molecule type" value="mRNA"/>
</dbReference>
<dbReference type="RefSeq" id="NP_001096211.1">
    <property type="nucleotide sequence ID" value="NM_001102741.1"/>
</dbReference>
<dbReference type="SMR" id="A4IJ15"/>
<dbReference type="FunCoup" id="A4IJ15">
    <property type="interactions" value="2430"/>
</dbReference>
<dbReference type="PaxDb" id="8364-ENSXETP00000064022"/>
<dbReference type="DNASU" id="100124762"/>
<dbReference type="GeneID" id="100124762"/>
<dbReference type="KEGG" id="xtr:100124762"/>
<dbReference type="AGR" id="Xenbase:XB-GENE-984859"/>
<dbReference type="CTD" id="57587"/>
<dbReference type="Xenbase" id="XB-GENE-984859">
    <property type="gene designation" value="cfap97"/>
</dbReference>
<dbReference type="eggNOG" id="ENOG502S0ZF">
    <property type="taxonomic scope" value="Eukaryota"/>
</dbReference>
<dbReference type="InParanoid" id="A4IJ15"/>
<dbReference type="OMA" id="DEKCCEE"/>
<dbReference type="OrthoDB" id="515313at2759"/>
<dbReference type="Proteomes" id="UP000008143">
    <property type="component" value="Chromosome 1"/>
</dbReference>
<dbReference type="InterPro" id="IPR038791">
    <property type="entry name" value="Cfap97/Hemingway"/>
</dbReference>
<dbReference type="InterPro" id="IPR029488">
    <property type="entry name" value="Hmw/CFAP97"/>
</dbReference>
<dbReference type="PANTHER" id="PTHR23035:SF1">
    <property type="entry name" value="CILIA- AND FLAGELLA-ASSOCIATED PROTEIN 97"/>
    <property type="match status" value="1"/>
</dbReference>
<dbReference type="PANTHER" id="PTHR23035">
    <property type="entry name" value="CILIA- AND FLAGELLA-ASSOCIATED PROTEIN 97-RELATED"/>
    <property type="match status" value="1"/>
</dbReference>
<dbReference type="Pfam" id="PF13879">
    <property type="entry name" value="Hmw_CFAP97"/>
    <property type="match status" value="1"/>
</dbReference>
<reference key="1">
    <citation type="submission" date="2007-03" db="EMBL/GenBank/DDBJ databases">
        <authorList>
            <consortium name="NIH - Xenopus Gene Collection (XGC) project"/>
        </authorList>
    </citation>
    <scope>NUCLEOTIDE SEQUENCE [LARGE SCALE MRNA]</scope>
    <source>
        <tissue>Brain</tissue>
    </source>
</reference>